<keyword id="KW-0520">NAD</keyword>
<keyword id="KW-0560">Oxidoreductase</keyword>
<keyword id="KW-1185">Reference proteome</keyword>
<feature type="chain" id="PRO_0000352586" description="Inositol 2-dehydrogenase">
    <location>
        <begin position="1"/>
        <end position="334"/>
    </location>
</feature>
<dbReference type="EC" id="1.1.1.18" evidence="1"/>
<dbReference type="EMBL" id="CP000144">
    <property type="protein sequence ID" value="ABA80890.2"/>
    <property type="molecule type" value="Genomic_DNA"/>
</dbReference>
<dbReference type="RefSeq" id="WP_017140345.1">
    <property type="nucleotide sequence ID" value="NC_007494.2"/>
</dbReference>
<dbReference type="RefSeq" id="YP_354791.2">
    <property type="nucleotide sequence ID" value="NC_007494.2"/>
</dbReference>
<dbReference type="SMR" id="Q3IX44"/>
<dbReference type="STRING" id="272943.RSP_3283"/>
<dbReference type="EnsemblBacteria" id="ABA80890">
    <property type="protein sequence ID" value="ABA80890"/>
    <property type="gene ID" value="RSP_3283"/>
</dbReference>
<dbReference type="GeneID" id="3721883"/>
<dbReference type="KEGG" id="rsp:RSP_3283"/>
<dbReference type="PATRIC" id="fig|272943.9.peg.3709"/>
<dbReference type="eggNOG" id="COG0673">
    <property type="taxonomic scope" value="Bacteria"/>
</dbReference>
<dbReference type="OrthoDB" id="9792935at2"/>
<dbReference type="Proteomes" id="UP000002703">
    <property type="component" value="Chromosome 2"/>
</dbReference>
<dbReference type="GO" id="GO:0050112">
    <property type="term" value="F:inositol 2-dehydrogenase (NAD+) activity"/>
    <property type="evidence" value="ECO:0007669"/>
    <property type="project" value="UniProtKB-UniRule"/>
</dbReference>
<dbReference type="GO" id="GO:0000166">
    <property type="term" value="F:nucleotide binding"/>
    <property type="evidence" value="ECO:0007669"/>
    <property type="project" value="InterPro"/>
</dbReference>
<dbReference type="GO" id="GO:0019310">
    <property type="term" value="P:inositol catabolic process"/>
    <property type="evidence" value="ECO:0007669"/>
    <property type="project" value="UniProtKB-UniRule"/>
</dbReference>
<dbReference type="Gene3D" id="3.30.360.10">
    <property type="entry name" value="Dihydrodipicolinate Reductase, domain 2"/>
    <property type="match status" value="1"/>
</dbReference>
<dbReference type="Gene3D" id="3.40.50.720">
    <property type="entry name" value="NAD(P)-binding Rossmann-like Domain"/>
    <property type="match status" value="1"/>
</dbReference>
<dbReference type="HAMAP" id="MF_01671">
    <property type="entry name" value="IolG"/>
    <property type="match status" value="1"/>
</dbReference>
<dbReference type="InterPro" id="IPR050424">
    <property type="entry name" value="Gfo-Idh-MocA_inositol_DH"/>
</dbReference>
<dbReference type="InterPro" id="IPR004104">
    <property type="entry name" value="Gfo/Idh/MocA-like_OxRdtase_C"/>
</dbReference>
<dbReference type="InterPro" id="IPR000683">
    <property type="entry name" value="Gfo/Idh/MocA-like_OxRdtase_N"/>
</dbReference>
<dbReference type="InterPro" id="IPR023794">
    <property type="entry name" value="MI/DCI_dehydrogenase"/>
</dbReference>
<dbReference type="InterPro" id="IPR036291">
    <property type="entry name" value="NAD(P)-bd_dom_sf"/>
</dbReference>
<dbReference type="PANTHER" id="PTHR43593">
    <property type="match status" value="1"/>
</dbReference>
<dbReference type="PANTHER" id="PTHR43593:SF1">
    <property type="entry name" value="INOSITOL 2-DEHYDROGENASE"/>
    <property type="match status" value="1"/>
</dbReference>
<dbReference type="Pfam" id="PF01408">
    <property type="entry name" value="GFO_IDH_MocA"/>
    <property type="match status" value="1"/>
</dbReference>
<dbReference type="Pfam" id="PF02894">
    <property type="entry name" value="GFO_IDH_MocA_C"/>
    <property type="match status" value="1"/>
</dbReference>
<dbReference type="SUPFAM" id="SSF55347">
    <property type="entry name" value="Glyceraldehyde-3-phosphate dehydrogenase-like, C-terminal domain"/>
    <property type="match status" value="1"/>
</dbReference>
<dbReference type="SUPFAM" id="SSF51735">
    <property type="entry name" value="NAD(P)-binding Rossmann-fold domains"/>
    <property type="match status" value="1"/>
</dbReference>
<reference key="1">
    <citation type="submission" date="2005-09" db="EMBL/GenBank/DDBJ databases">
        <title>Complete sequence of chromosome 2 of Rhodobacter sphaeroides 2.4.1.</title>
        <authorList>
            <person name="Copeland A."/>
            <person name="Lucas S."/>
            <person name="Lapidus A."/>
            <person name="Barry K."/>
            <person name="Detter J.C."/>
            <person name="Glavina T."/>
            <person name="Hammon N."/>
            <person name="Israni S."/>
            <person name="Pitluck S."/>
            <person name="Richardson P."/>
            <person name="Mackenzie C."/>
            <person name="Choudhary M."/>
            <person name="Larimer F."/>
            <person name="Hauser L.J."/>
            <person name="Land M."/>
            <person name="Donohue T.J."/>
            <person name="Kaplan S."/>
        </authorList>
    </citation>
    <scope>NUCLEOTIDE SEQUENCE [LARGE SCALE GENOMIC DNA]</scope>
    <source>
        <strain>ATCC 17023 / DSM 158 / JCM 6121 / CCUG 31486 / LMG 2827 / NBRC 12203 / NCIMB 8253 / ATH 2.4.1.</strain>
    </source>
</reference>
<organism>
    <name type="scientific">Cereibacter sphaeroides (strain ATCC 17023 / DSM 158 / JCM 6121 / CCUG 31486 / LMG 2827 / NBRC 12203 / NCIMB 8253 / ATH 2.4.1.)</name>
    <name type="common">Rhodobacter sphaeroides</name>
    <dbReference type="NCBI Taxonomy" id="272943"/>
    <lineage>
        <taxon>Bacteria</taxon>
        <taxon>Pseudomonadati</taxon>
        <taxon>Pseudomonadota</taxon>
        <taxon>Alphaproteobacteria</taxon>
        <taxon>Rhodobacterales</taxon>
        <taxon>Paracoccaceae</taxon>
        <taxon>Cereibacter</taxon>
    </lineage>
</organism>
<gene>
    <name evidence="1" type="primary">iolG</name>
    <name type="ordered locus">RHOS4_33220</name>
    <name type="ORF">RSP_3283</name>
</gene>
<accession>Q3IX44</accession>
<evidence type="ECO:0000255" key="1">
    <source>
        <dbReference type="HAMAP-Rule" id="MF_01671"/>
    </source>
</evidence>
<sequence length="334" mass="36118">MTLRIGIIGTGAIGTDHARRINRVLSGAEVTAVTDVNRDSAEACVAGVAPGAQILGSAEEVIAASDAVLVCSWGTAHETQVLAAIAAGKPCFCEKPLATEAYGARRIVEAEEAMGRRLVQVGFMRRYDRGYVALKETVRTRLGPPLMIHAAHRNPSVPGRYRTPMAIHDTLIHEIDVLRWLLDDEYVSAQVIFPRATRHTHAGLRDPQIVLLETAKGVRIDVEIFVNCRYGYDIQCEVVGEEGTARLPEPTAIPTRLGAVFGQPILMDWKDRFIDSYDVELQDFLKAAAQGTAAGPSAWDGYAAAITADVCVQAQERPGAILPVTLPARPALYA</sequence>
<comment type="function">
    <text evidence="1">Involved in the oxidation of myo-inositol (MI) to 2-keto-myo-inositol (2KMI or 2-inosose).</text>
</comment>
<comment type="catalytic activity">
    <reaction evidence="1">
        <text>myo-inositol + NAD(+) = scyllo-inosose + NADH + H(+)</text>
        <dbReference type="Rhea" id="RHEA:16949"/>
        <dbReference type="ChEBI" id="CHEBI:15378"/>
        <dbReference type="ChEBI" id="CHEBI:17268"/>
        <dbReference type="ChEBI" id="CHEBI:17811"/>
        <dbReference type="ChEBI" id="CHEBI:57540"/>
        <dbReference type="ChEBI" id="CHEBI:57945"/>
        <dbReference type="EC" id="1.1.1.18"/>
    </reaction>
</comment>
<comment type="subunit">
    <text evidence="1">Homotetramer.</text>
</comment>
<comment type="similarity">
    <text evidence="1">Belongs to the Gfo/Idh/MocA family.</text>
</comment>
<name>IOLG_CERS4</name>
<proteinExistence type="inferred from homology"/>
<protein>
    <recommendedName>
        <fullName evidence="1">Inositol 2-dehydrogenase</fullName>
        <ecNumber evidence="1">1.1.1.18</ecNumber>
    </recommendedName>
    <alternativeName>
        <fullName evidence="1">Myo-inositol 2-dehydrogenase</fullName>
        <shortName evidence="1">MI 2-dehydrogenase</shortName>
    </alternativeName>
</protein>